<protein>
    <recommendedName>
        <fullName evidence="11">Tlg2p-like protein a</fullName>
        <shortName evidence="11">AtTLG2a</shortName>
    </recommendedName>
    <alternativeName>
        <fullName evidence="12">Syntaxin-41</fullName>
        <shortName evidence="12">AtSYP41</shortName>
    </alternativeName>
</protein>
<sequence>MATRNRTLLFRKYRNSLRSVRAPLSSSSLTGTRSGGVGPVIEMASTSLLNPNRSYAPISTEDPGTSSKGAITVGLPPAWVDVSEEISVNIQRARTKMAELGKAHAKALMPSFGDGKEDQHNIESLTQEITFLLKKSEKQLQRLSASGPSEDSNVRKNVQRSLATDLQLLSMELRKKQSTYLKRLRQQKEDGMDLEMNLSRNRYRPEEDDFGDMLNEHQMSKIKKSEEVSVEREKEIQQVVESVNDLAQIMKDLSALVIDQGTIVDRIDYNIENVATTVEDGLKQLQKAERTQRHGGMVKCASVLVILCFIMLLLLILKEIFL</sequence>
<gene>
    <name evidence="12" type="primary">SYP41</name>
    <name evidence="11" type="synonym">TLG2a</name>
    <name evidence="14" type="ordered locus">At5g26980</name>
    <name evidence="15" type="ORF">F2P16.16</name>
</gene>
<feature type="chain" id="PRO_0000210258" description="Tlg2p-like protein a">
    <location>
        <begin position="1"/>
        <end position="322"/>
    </location>
</feature>
<feature type="topological domain" description="Cytoplasmic" evidence="1">
    <location>
        <begin position="1"/>
        <end position="301"/>
    </location>
</feature>
<feature type="transmembrane region" description="Helical; Anchor for type IV membrane protein" evidence="1">
    <location>
        <begin position="302"/>
        <end position="322"/>
    </location>
</feature>
<feature type="domain" description="t-SNARE coiled-coil homology" evidence="2">
    <location>
        <begin position="226"/>
        <end position="288"/>
    </location>
</feature>
<feature type="coiled-coil region" evidence="1">
    <location>
        <begin position="116"/>
        <end position="146"/>
    </location>
</feature>
<organism>
    <name type="scientific">Arabidopsis thaliana</name>
    <name type="common">Mouse-ear cress</name>
    <dbReference type="NCBI Taxonomy" id="3702"/>
    <lineage>
        <taxon>Eukaryota</taxon>
        <taxon>Viridiplantae</taxon>
        <taxon>Streptophyta</taxon>
        <taxon>Embryophyta</taxon>
        <taxon>Tracheophyta</taxon>
        <taxon>Spermatophyta</taxon>
        <taxon>Magnoliopsida</taxon>
        <taxon>eudicotyledons</taxon>
        <taxon>Gunneridae</taxon>
        <taxon>Pentapetalae</taxon>
        <taxon>rosids</taxon>
        <taxon>malvids</taxon>
        <taxon>Brassicales</taxon>
        <taxon>Brassicaceae</taxon>
        <taxon>Camelineae</taxon>
        <taxon>Arabidopsis</taxon>
    </lineage>
</organism>
<comment type="function">
    <text evidence="7 9 10">Contributes to the regulation of secretory and vacuolar transport pathways in the post-Golgi network, and to the maintenance of the Golgi apparatus and trans-Golgi network (TGN) morphologies (PubMed:22307646). Together with VTI12, required for membrane fusion (PubMed:15919093). Vesicle trafficking protein that functions in the secretory pathway and mediates liposome fusion; the fusion of phospholipid vesicles containing SYP41 and VTI12 is triggered by YKT61 and YKT62 (PubMed:15919093, PubMed:24021022). Required for extracellular resistance responses to a fungal pathogen (PubMed:22307646). Also involved in the protection of chloroplasts from salicylic acid-dependent biotic stress (PubMed:22307646).</text>
</comment>
<comment type="subunit">
    <text evidence="3 4 7 8">Interacts with VTI12 and SYP61 to form a t-SNARE complex and with VPS45 (PubMed:10888666, PubMed:11739776, PubMed:15919093). Interacts with TNO1 (PubMed:21521696). Binds to YKT61 and YKT62 (PubMed:15919093). Core constituent of the SNARE complex required for membrane fusion at the trans-Golgi network (PubMed:15919093).</text>
</comment>
<comment type="interaction">
    <interactant intactId="EBI-1750331">
        <id>O65359</id>
    </interactant>
    <interactant intactId="EBI-1750377">
        <id>O49048</id>
        <label>VPS45</label>
    </interactant>
    <organismsDiffer>false</organismsDiffer>
    <experiments>6</experiments>
</comment>
<comment type="subcellular location">
    <subcellularLocation>
        <location evidence="3 4 5 6 9">Golgi apparatus</location>
        <location evidence="3 4 5 6 9">trans-Golgi network membrane</location>
        <topology evidence="1">Single-pass type IV membrane protein</topology>
    </subcellularLocation>
    <text evidence="4">SYP41 is found in a different region of the TGN than SYP42.</text>
</comment>
<comment type="tissue specificity">
    <text evidence="5 8">Mostly expressed in flowers, to a lower extent in leaves and roots, and, at low levels, in stems.</text>
</comment>
<comment type="disruption phenotype">
    <text evidence="9">Gametophytic lethal in homozygote plants (PubMed:22307646). The double mutant syp41 syp42 have short roots (PubMed:22307646). Plants lacking the three genes SYP41 SYP42 and SYP43 are seedling lethals (PubMed:22307646).</text>
</comment>
<comment type="similarity">
    <text evidence="13">Belongs to the syntaxin family.</text>
</comment>
<comment type="sequence caution" evidence="13">
    <conflict type="erroneous gene model prediction">
        <sequence resource="EMBL-CDS" id="AAB61065"/>
    </conflict>
</comment>
<dbReference type="EMBL" id="AF067789">
    <property type="protein sequence ID" value="AAC27707.1"/>
    <property type="molecule type" value="mRNA"/>
</dbReference>
<dbReference type="EMBL" id="AF007270">
    <property type="protein sequence ID" value="AAB61065.1"/>
    <property type="status" value="ALT_SEQ"/>
    <property type="molecule type" value="Genomic_DNA"/>
</dbReference>
<dbReference type="EMBL" id="CP002688">
    <property type="protein sequence ID" value="AED93636.1"/>
    <property type="molecule type" value="Genomic_DNA"/>
</dbReference>
<dbReference type="EMBL" id="CP002688">
    <property type="protein sequence ID" value="AED93637.1"/>
    <property type="molecule type" value="Genomic_DNA"/>
</dbReference>
<dbReference type="EMBL" id="CP002688">
    <property type="protein sequence ID" value="ANM70302.1"/>
    <property type="molecule type" value="Genomic_DNA"/>
</dbReference>
<dbReference type="RefSeq" id="NP_001031950.1">
    <property type="nucleotide sequence ID" value="NM_001036873.2"/>
</dbReference>
<dbReference type="RefSeq" id="NP_001331924.1">
    <property type="nucleotide sequence ID" value="NM_001343989.1"/>
</dbReference>
<dbReference type="RefSeq" id="NP_198050.1">
    <property type="nucleotide sequence ID" value="NM_122580.4"/>
</dbReference>
<dbReference type="SMR" id="O65359"/>
<dbReference type="BioGRID" id="18031">
    <property type="interactions" value="29"/>
</dbReference>
<dbReference type="FunCoup" id="O65359">
    <property type="interactions" value="3890"/>
</dbReference>
<dbReference type="IntAct" id="O65359">
    <property type="interactions" value="25"/>
</dbReference>
<dbReference type="STRING" id="3702.O65359"/>
<dbReference type="PaxDb" id="3702-AT5G26980.1"/>
<dbReference type="ProteomicsDB" id="228485"/>
<dbReference type="EnsemblPlants" id="AT5G26980.1">
    <property type="protein sequence ID" value="AT5G26980.1"/>
    <property type="gene ID" value="AT5G26980"/>
</dbReference>
<dbReference type="EnsemblPlants" id="AT5G26980.2">
    <property type="protein sequence ID" value="AT5G26980.2"/>
    <property type="gene ID" value="AT5G26980"/>
</dbReference>
<dbReference type="EnsemblPlants" id="AT5G26980.3">
    <property type="protein sequence ID" value="AT5G26980.3"/>
    <property type="gene ID" value="AT5G26980"/>
</dbReference>
<dbReference type="GeneID" id="832756"/>
<dbReference type="Gramene" id="AT5G26980.1">
    <property type="protein sequence ID" value="AT5G26980.1"/>
    <property type="gene ID" value="AT5G26980"/>
</dbReference>
<dbReference type="Gramene" id="AT5G26980.2">
    <property type="protein sequence ID" value="AT5G26980.2"/>
    <property type="gene ID" value="AT5G26980"/>
</dbReference>
<dbReference type="Gramene" id="AT5G26980.3">
    <property type="protein sequence ID" value="AT5G26980.3"/>
    <property type="gene ID" value="AT5G26980"/>
</dbReference>
<dbReference type="KEGG" id="ath:AT5G26980"/>
<dbReference type="Araport" id="AT5G26980"/>
<dbReference type="TAIR" id="AT5G26980">
    <property type="gene designation" value="SYP41"/>
</dbReference>
<dbReference type="eggNOG" id="KOG0809">
    <property type="taxonomic scope" value="Eukaryota"/>
</dbReference>
<dbReference type="HOGENOM" id="CLU_038177_1_0_1"/>
<dbReference type="InParanoid" id="O65359"/>
<dbReference type="OMA" id="DFRRCHA"/>
<dbReference type="PhylomeDB" id="O65359"/>
<dbReference type="PRO" id="PR:O65359"/>
<dbReference type="Proteomes" id="UP000006548">
    <property type="component" value="Chromosome 5"/>
</dbReference>
<dbReference type="ExpressionAtlas" id="O65359">
    <property type="expression patterns" value="baseline and differential"/>
</dbReference>
<dbReference type="GO" id="GO:0031201">
    <property type="term" value="C:SNARE complex"/>
    <property type="evidence" value="ECO:0000314"/>
    <property type="project" value="UniProtKB"/>
</dbReference>
<dbReference type="GO" id="GO:0005802">
    <property type="term" value="C:trans-Golgi network"/>
    <property type="evidence" value="ECO:0000314"/>
    <property type="project" value="UniProtKB"/>
</dbReference>
<dbReference type="GO" id="GO:0005484">
    <property type="term" value="F:SNAP receptor activity"/>
    <property type="evidence" value="ECO:0007669"/>
    <property type="project" value="InterPro"/>
</dbReference>
<dbReference type="GO" id="GO:0009658">
    <property type="term" value="P:chloroplast organization"/>
    <property type="evidence" value="ECO:0000315"/>
    <property type="project" value="UniProtKB"/>
</dbReference>
<dbReference type="GO" id="GO:0050832">
    <property type="term" value="P:defense response to fungus"/>
    <property type="evidence" value="ECO:0000315"/>
    <property type="project" value="UniProtKB"/>
</dbReference>
<dbReference type="GO" id="GO:0007030">
    <property type="term" value="P:Golgi organization"/>
    <property type="evidence" value="ECO:0000315"/>
    <property type="project" value="UniProtKB"/>
</dbReference>
<dbReference type="GO" id="GO:0043001">
    <property type="term" value="P:Golgi to plasma membrane protein transport"/>
    <property type="evidence" value="ECO:0000315"/>
    <property type="project" value="UniProtKB"/>
</dbReference>
<dbReference type="GO" id="GO:0006896">
    <property type="term" value="P:Golgi to vacuole transport"/>
    <property type="evidence" value="ECO:0000315"/>
    <property type="project" value="UniProtKB"/>
</dbReference>
<dbReference type="GO" id="GO:0006886">
    <property type="term" value="P:intracellular protein transport"/>
    <property type="evidence" value="ECO:0000315"/>
    <property type="project" value="UniProtKB"/>
</dbReference>
<dbReference type="GO" id="GO:0009863">
    <property type="term" value="P:salicylic acid mediated signaling pathway"/>
    <property type="evidence" value="ECO:0000315"/>
    <property type="project" value="UniProtKB"/>
</dbReference>
<dbReference type="GO" id="GO:0098629">
    <property type="term" value="P:trans-Golgi network membrane organization"/>
    <property type="evidence" value="ECO:0000315"/>
    <property type="project" value="UniProtKB"/>
</dbReference>
<dbReference type="GO" id="GO:0006906">
    <property type="term" value="P:vesicle fusion"/>
    <property type="evidence" value="ECO:0000314"/>
    <property type="project" value="UniProtKB"/>
</dbReference>
<dbReference type="CDD" id="cd15845">
    <property type="entry name" value="SNARE_syntaxin16"/>
    <property type="match status" value="1"/>
</dbReference>
<dbReference type="FunFam" id="1.20.58.70:FF:000010">
    <property type="entry name" value="Syntaxin-43"/>
    <property type="match status" value="1"/>
</dbReference>
<dbReference type="Gene3D" id="1.20.58.70">
    <property type="match status" value="1"/>
</dbReference>
<dbReference type="InterPro" id="IPR010989">
    <property type="entry name" value="SNARE"/>
</dbReference>
<dbReference type="InterPro" id="IPR045242">
    <property type="entry name" value="Syntaxin"/>
</dbReference>
<dbReference type="InterPro" id="IPR006012">
    <property type="entry name" value="Syntaxin/epimorphin_CS"/>
</dbReference>
<dbReference type="InterPro" id="IPR006011">
    <property type="entry name" value="Syntaxin_N"/>
</dbReference>
<dbReference type="InterPro" id="IPR000727">
    <property type="entry name" value="T_SNARE_dom"/>
</dbReference>
<dbReference type="PANTHER" id="PTHR19957">
    <property type="entry name" value="SYNTAXIN"/>
    <property type="match status" value="1"/>
</dbReference>
<dbReference type="PANTHER" id="PTHR19957:SF83">
    <property type="entry name" value="SYNTAXIN-16"/>
    <property type="match status" value="1"/>
</dbReference>
<dbReference type="Pfam" id="PF05739">
    <property type="entry name" value="SNARE"/>
    <property type="match status" value="1"/>
</dbReference>
<dbReference type="SMART" id="SM00503">
    <property type="entry name" value="SynN"/>
    <property type="match status" value="1"/>
</dbReference>
<dbReference type="SMART" id="SM00397">
    <property type="entry name" value="t_SNARE"/>
    <property type="match status" value="1"/>
</dbReference>
<dbReference type="SUPFAM" id="SSF47661">
    <property type="entry name" value="t-snare proteins"/>
    <property type="match status" value="1"/>
</dbReference>
<dbReference type="PROSITE" id="PS00914">
    <property type="entry name" value="SYNTAXIN"/>
    <property type="match status" value="1"/>
</dbReference>
<dbReference type="PROSITE" id="PS50192">
    <property type="entry name" value="T_SNARE"/>
    <property type="match status" value="1"/>
</dbReference>
<accession>O65359</accession>
<accession>O04639</accession>
<name>SYP41_ARATH</name>
<keyword id="KW-0175">Coiled coil</keyword>
<keyword id="KW-0333">Golgi apparatus</keyword>
<keyword id="KW-0472">Membrane</keyword>
<keyword id="KW-0611">Plant defense</keyword>
<keyword id="KW-0653">Protein transport</keyword>
<keyword id="KW-1185">Reference proteome</keyword>
<keyword id="KW-0812">Transmembrane</keyword>
<keyword id="KW-1133">Transmembrane helix</keyword>
<keyword id="KW-0813">Transport</keyword>
<proteinExistence type="evidence at protein level"/>
<evidence type="ECO:0000255" key="1"/>
<evidence type="ECO:0000255" key="2">
    <source>
        <dbReference type="PROSITE-ProRule" id="PRU00202"/>
    </source>
</evidence>
<evidence type="ECO:0000269" key="3">
    <source>
    </source>
</evidence>
<evidence type="ECO:0000269" key="4">
    <source>
    </source>
</evidence>
<evidence type="ECO:0000269" key="5">
    <source>
    </source>
</evidence>
<evidence type="ECO:0000269" key="6">
    <source>
    </source>
</evidence>
<evidence type="ECO:0000269" key="7">
    <source>
    </source>
</evidence>
<evidence type="ECO:0000269" key="8">
    <source>
    </source>
</evidence>
<evidence type="ECO:0000269" key="9">
    <source>
    </source>
</evidence>
<evidence type="ECO:0000269" key="10">
    <source>
    </source>
</evidence>
<evidence type="ECO:0000303" key="11">
    <source>
    </source>
</evidence>
<evidence type="ECO:0000303" key="12">
    <source>
    </source>
</evidence>
<evidence type="ECO:0000305" key="13"/>
<evidence type="ECO:0000312" key="14">
    <source>
        <dbReference type="Araport" id="AT5G26980"/>
    </source>
</evidence>
<evidence type="ECO:0000312" key="15">
    <source>
        <dbReference type="EMBL" id="AAB61065.1"/>
    </source>
</evidence>
<reference key="1">
    <citation type="journal article" date="2000" name="Mol. Biol. Cell">
        <title>AtVPS45 complex formation at the trans-Golgi network.</title>
        <authorList>
            <person name="Bassham D.C."/>
            <person name="Sanderfoot A.A."/>
            <person name="Kovaleva V."/>
            <person name="Zheng H."/>
            <person name="Raikhel N.V."/>
        </authorList>
    </citation>
    <scope>NUCLEOTIDE SEQUENCE</scope>
    <scope>INTERACTION WITH VPS45 AND VTI12</scope>
    <scope>SUBCELLULAR LOCATION</scope>
    <source>
        <strain>cv. Columbia</strain>
    </source>
</reference>
<reference key="2">
    <citation type="journal article" date="2000" name="Nature">
        <title>Sequence and analysis of chromosome 5 of the plant Arabidopsis thaliana.</title>
        <authorList>
            <person name="Tabata S."/>
            <person name="Kaneko T."/>
            <person name="Nakamura Y."/>
            <person name="Kotani H."/>
            <person name="Kato T."/>
            <person name="Asamizu E."/>
            <person name="Miyajima N."/>
            <person name="Sasamoto S."/>
            <person name="Kimura T."/>
            <person name="Hosouchi T."/>
            <person name="Kawashima K."/>
            <person name="Kohara M."/>
            <person name="Matsumoto M."/>
            <person name="Matsuno A."/>
            <person name="Muraki A."/>
            <person name="Nakayama S."/>
            <person name="Nakazaki N."/>
            <person name="Naruo K."/>
            <person name="Okumura S."/>
            <person name="Shinpo S."/>
            <person name="Takeuchi C."/>
            <person name="Wada T."/>
            <person name="Watanabe A."/>
            <person name="Yamada M."/>
            <person name="Yasuda M."/>
            <person name="Sato S."/>
            <person name="de la Bastide M."/>
            <person name="Huang E."/>
            <person name="Spiegel L."/>
            <person name="Gnoj L."/>
            <person name="O'Shaughnessy A."/>
            <person name="Preston R."/>
            <person name="Habermann K."/>
            <person name="Murray J."/>
            <person name="Johnson D."/>
            <person name="Rohlfing T."/>
            <person name="Nelson J."/>
            <person name="Stoneking T."/>
            <person name="Pepin K."/>
            <person name="Spieth J."/>
            <person name="Sekhon M."/>
            <person name="Armstrong J."/>
            <person name="Becker M."/>
            <person name="Belter E."/>
            <person name="Cordum H."/>
            <person name="Cordes M."/>
            <person name="Courtney L."/>
            <person name="Courtney W."/>
            <person name="Dante M."/>
            <person name="Du H."/>
            <person name="Edwards J."/>
            <person name="Fryman J."/>
            <person name="Haakensen B."/>
            <person name="Lamar E."/>
            <person name="Latreille P."/>
            <person name="Leonard S."/>
            <person name="Meyer R."/>
            <person name="Mulvaney E."/>
            <person name="Ozersky P."/>
            <person name="Riley A."/>
            <person name="Strowmatt C."/>
            <person name="Wagner-McPherson C."/>
            <person name="Wollam A."/>
            <person name="Yoakum M."/>
            <person name="Bell M."/>
            <person name="Dedhia N."/>
            <person name="Parnell L."/>
            <person name="Shah R."/>
            <person name="Rodriguez M."/>
            <person name="Hoon See L."/>
            <person name="Vil D."/>
            <person name="Baker J."/>
            <person name="Kirchoff K."/>
            <person name="Toth K."/>
            <person name="King L."/>
            <person name="Bahret A."/>
            <person name="Miller B."/>
            <person name="Marra M.A."/>
            <person name="Martienssen R."/>
            <person name="McCombie W.R."/>
            <person name="Wilson R.K."/>
            <person name="Murphy G."/>
            <person name="Bancroft I."/>
            <person name="Volckaert G."/>
            <person name="Wambutt R."/>
            <person name="Duesterhoeft A."/>
            <person name="Stiekema W."/>
            <person name="Pohl T."/>
            <person name="Entian K.-D."/>
            <person name="Terryn N."/>
            <person name="Hartley N."/>
            <person name="Bent E."/>
            <person name="Johnson S."/>
            <person name="Langham S.-A."/>
            <person name="McCullagh B."/>
            <person name="Robben J."/>
            <person name="Grymonprez B."/>
            <person name="Zimmermann W."/>
            <person name="Ramsperger U."/>
            <person name="Wedler H."/>
            <person name="Balke K."/>
            <person name="Wedler E."/>
            <person name="Peters S."/>
            <person name="van Staveren M."/>
            <person name="Dirkse W."/>
            <person name="Mooijman P."/>
            <person name="Klein Lankhorst R."/>
            <person name="Weitzenegger T."/>
            <person name="Bothe G."/>
            <person name="Rose M."/>
            <person name="Hauf J."/>
            <person name="Berneiser S."/>
            <person name="Hempel S."/>
            <person name="Feldpausch M."/>
            <person name="Lamberth S."/>
            <person name="Villarroel R."/>
            <person name="Gielen J."/>
            <person name="Ardiles W."/>
            <person name="Bents O."/>
            <person name="Lemcke K."/>
            <person name="Kolesov G."/>
            <person name="Mayer K.F.X."/>
            <person name="Rudd S."/>
            <person name="Schoof H."/>
            <person name="Schueller C."/>
            <person name="Zaccaria P."/>
            <person name="Mewes H.-W."/>
            <person name="Bevan M."/>
            <person name="Fransz P.F."/>
        </authorList>
    </citation>
    <scope>NUCLEOTIDE SEQUENCE [LARGE SCALE GENOMIC DNA]</scope>
    <source>
        <strain>cv. Columbia</strain>
    </source>
</reference>
<reference key="3">
    <citation type="journal article" date="2017" name="Plant J.">
        <title>Araport11: a complete reannotation of the Arabidopsis thaliana reference genome.</title>
        <authorList>
            <person name="Cheng C.Y."/>
            <person name="Krishnakumar V."/>
            <person name="Chan A.P."/>
            <person name="Thibaud-Nissen F."/>
            <person name="Schobel S."/>
            <person name="Town C.D."/>
        </authorList>
    </citation>
    <scope>GENOME REANNOTATION</scope>
    <source>
        <strain>cv. Columbia</strain>
    </source>
</reference>
<reference key="4">
    <citation type="journal article" date="2001" name="Mol. Biol. Cell">
        <title>Interactions between syntaxins identify at least five SNARE complexes within the Golgi/prevacuolar system of the Arabidopsis cell.</title>
        <authorList>
            <person name="Sanderfoot A.A."/>
            <person name="Kovaleva V."/>
            <person name="Bassham D.C."/>
            <person name="Raikhel N.V."/>
        </authorList>
    </citation>
    <scope>INTERACTION WITH VTI12 AND SYP61</scope>
    <scope>SUBCELLULAR LOCATION</scope>
</reference>
<reference key="5">
    <citation type="journal article" date="2004" name="Cell Struct. Funct.">
        <title>Systematic analysis of SNARE molecules in Arabidopsis: dissection of the post-Golgi network in plant cells.</title>
        <authorList>
            <person name="Uemura T."/>
            <person name="Ueda T."/>
            <person name="Ohniwa R.L."/>
            <person name="Nakano A."/>
            <person name="Takeyasu K."/>
            <person name="Sato M.H."/>
        </authorList>
    </citation>
    <scope>SUBCELLULAR LOCATION</scope>
    <scope>TISSUE SPECIFICITY</scope>
</reference>
<reference key="6">
    <citation type="journal article" date="2005" name="Development">
        <title>VAN3 ARF-GAP-mediated vesicle transport is involved in leaf vascular network formation.</title>
        <authorList>
            <person name="Koizumi K."/>
            <person name="Naramoto S."/>
            <person name="Sawa S."/>
            <person name="Yahara N."/>
            <person name="Ueda T."/>
            <person name="Nakano A."/>
            <person name="Sugiyama M."/>
            <person name="Fukuda H."/>
        </authorList>
    </citation>
    <scope>SUBCELLULAR LOCATION</scope>
</reference>
<reference key="7">
    <citation type="journal article" date="2005" name="J. Mol. Biol.">
        <title>YKT6 is a core constituent of membrane fusion machineries at the Arabidopsis trans-Golgi network.</title>
        <authorList>
            <person name="Chen Y."/>
            <person name="Shin Y.-K."/>
            <person name="Bassham D.C."/>
        </authorList>
    </citation>
    <scope>FUNCTION</scope>
    <scope>SUBUNIT</scope>
    <scope>INTERACTION WITH SYP61; YKT61; YKT62 AND VTI12</scope>
</reference>
<reference key="8">
    <citation type="journal article" date="2011" name="Plant Physiol.">
        <title>TNO1 is involved in salt tolerance and vacuolar trafficking in Arabidopsis.</title>
        <authorList>
            <person name="Kim S.-J."/>
            <person name="Bassham D.C."/>
        </authorList>
    </citation>
    <scope>INTERACTION WITH TNO1</scope>
    <scope>TISSUE SPECIFICITY</scope>
    <source>
        <tissue>Silique</tissue>
    </source>
</reference>
<reference key="9">
    <citation type="journal article" date="2012" name="Proc. Natl. Acad. Sci. U.S.A.">
        <title>Qa-SNAREs localized to the trans-Golgi network regulate multiple transport pathways and extracellular disease resistance in plants.</title>
        <authorList>
            <person name="Uemura T."/>
            <person name="Kim H."/>
            <person name="Saito C."/>
            <person name="Ebine K."/>
            <person name="Ueda T."/>
            <person name="Schulze-Lefert P."/>
            <person name="Nakano A."/>
        </authorList>
    </citation>
    <scope>FUNCTION</scope>
    <scope>DISRUPTION PHENOTYPE</scope>
    <scope>SUBCELLULAR LOCATION</scope>
    <scope>GENE FAMILY</scope>
    <source>
        <strain>cv. Columbia</strain>
    </source>
</reference>
<reference key="10">
    <citation type="journal article" date="2013" name="BMC Biochem.">
        <title>Functional redundancy between trans-Golgi network SNARE family members in Arabidopsis thaliana.</title>
        <authorList>
            <person name="Kim S.-J."/>
            <person name="Bassham D.C."/>
        </authorList>
    </citation>
    <scope>FUNCTION</scope>
</reference>